<comment type="function">
    <text evidence="1">Metal-responsive transcriptional repressor for the cmt operon. Binding of cadmium or lead causes the repressor to dissociate from the DNA (By similarity).</text>
</comment>
<comment type="subunit">
    <text evidence="1">Homodimer.</text>
</comment>
<sequence>MLTCEMRESALARLGRALADPTRCRILVALLDGVCYPGQLAAHLGLTRSNVSNHLSCLRGCGLVVATYEGRQVRYALADSHLARALGELVQVVLAVDTDQPCVAERAASGEAVEMTGS</sequence>
<protein>
    <recommendedName>
        <fullName>HTH-type transcriptional regulator CmtR</fullName>
    </recommendedName>
</protein>
<keyword id="KW-0104">Cadmium</keyword>
<keyword id="KW-0238">DNA-binding</keyword>
<keyword id="KW-0479">Metal-binding</keyword>
<keyword id="KW-1185">Reference proteome</keyword>
<keyword id="KW-0804">Transcription</keyword>
<keyword id="KW-0805">Transcription regulation</keyword>
<name>CMTR_MYCTO</name>
<reference key="1">
    <citation type="journal article" date="2002" name="J. Bacteriol.">
        <title>Whole-genome comparison of Mycobacterium tuberculosis clinical and laboratory strains.</title>
        <authorList>
            <person name="Fleischmann R.D."/>
            <person name="Alland D."/>
            <person name="Eisen J.A."/>
            <person name="Carpenter L."/>
            <person name="White O."/>
            <person name="Peterson J.D."/>
            <person name="DeBoy R.T."/>
            <person name="Dodson R.J."/>
            <person name="Gwinn M.L."/>
            <person name="Haft D.H."/>
            <person name="Hickey E.K."/>
            <person name="Kolonay J.F."/>
            <person name="Nelson W.C."/>
            <person name="Umayam L.A."/>
            <person name="Ermolaeva M.D."/>
            <person name="Salzberg S.L."/>
            <person name="Delcher A."/>
            <person name="Utterback T.R."/>
            <person name="Weidman J.F."/>
            <person name="Khouri H.M."/>
            <person name="Gill J."/>
            <person name="Mikula A."/>
            <person name="Bishai W."/>
            <person name="Jacobs W.R. Jr."/>
            <person name="Venter J.C."/>
            <person name="Fraser C.M."/>
        </authorList>
    </citation>
    <scope>NUCLEOTIDE SEQUENCE [LARGE SCALE GENOMIC DNA]</scope>
    <source>
        <strain>CDC 1551 / Oshkosh</strain>
    </source>
</reference>
<feature type="chain" id="PRO_0000427296" description="HTH-type transcriptional regulator CmtR">
    <location>
        <begin position="1"/>
        <end position="118"/>
    </location>
</feature>
<feature type="domain" description="HTH arsR-type" evidence="2">
    <location>
        <begin position="3"/>
        <end position="97"/>
    </location>
</feature>
<feature type="binding site" description="in other chain" evidence="2">
    <location>
        <position position="57"/>
    </location>
    <ligand>
        <name>Cd(2+)</name>
        <dbReference type="ChEBI" id="CHEBI:48775"/>
        <note>ligand shared between dimeric partners</note>
    </ligand>
</feature>
<feature type="binding site" description="in other chain" evidence="2">
    <location>
        <position position="61"/>
    </location>
    <ligand>
        <name>Cd(2+)</name>
        <dbReference type="ChEBI" id="CHEBI:48775"/>
        <note>ligand shared between dimeric partners</note>
    </ligand>
</feature>
<feature type="binding site" evidence="2">
    <location>
        <position position="102"/>
    </location>
    <ligand>
        <name>Cd(2+)</name>
        <dbReference type="ChEBI" id="CHEBI:48775"/>
        <note>ligand shared between dimeric partners</note>
    </ligand>
</feature>
<gene>
    <name type="primary">cmtR</name>
    <name type="ordered locus">MT2050</name>
</gene>
<evidence type="ECO:0000250" key="1"/>
<evidence type="ECO:0000255" key="2">
    <source>
        <dbReference type="PROSITE-ProRule" id="PRU00340"/>
    </source>
</evidence>
<dbReference type="EMBL" id="AE000516">
    <property type="protein sequence ID" value="AAK46327.1"/>
    <property type="molecule type" value="Genomic_DNA"/>
</dbReference>
<dbReference type="PIR" id="H70757">
    <property type="entry name" value="H70757"/>
</dbReference>
<dbReference type="RefSeq" id="WP_003410018.1">
    <property type="nucleotide sequence ID" value="NZ_KK341227.1"/>
</dbReference>
<dbReference type="BMRB" id="P9WMI8"/>
<dbReference type="SMR" id="P9WMI8"/>
<dbReference type="GeneID" id="45425973"/>
<dbReference type="KEGG" id="mtc:MT2050"/>
<dbReference type="PATRIC" id="fig|83331.31.peg.2207"/>
<dbReference type="HOGENOM" id="CLU_097806_5_2_11"/>
<dbReference type="Proteomes" id="UP000001020">
    <property type="component" value="Chromosome"/>
</dbReference>
<dbReference type="GO" id="GO:0097063">
    <property type="term" value="F:cadmium ion sensor activity"/>
    <property type="evidence" value="ECO:0007669"/>
    <property type="project" value="TreeGrafter"/>
</dbReference>
<dbReference type="GO" id="GO:0003677">
    <property type="term" value="F:DNA binding"/>
    <property type="evidence" value="ECO:0007669"/>
    <property type="project" value="UniProtKB-KW"/>
</dbReference>
<dbReference type="GO" id="GO:0003700">
    <property type="term" value="F:DNA-binding transcription factor activity"/>
    <property type="evidence" value="ECO:0007669"/>
    <property type="project" value="InterPro"/>
</dbReference>
<dbReference type="GO" id="GO:0032791">
    <property type="term" value="F:lead ion binding"/>
    <property type="evidence" value="ECO:0007669"/>
    <property type="project" value="TreeGrafter"/>
</dbReference>
<dbReference type="GO" id="GO:0046686">
    <property type="term" value="P:response to cadmium ion"/>
    <property type="evidence" value="ECO:0007669"/>
    <property type="project" value="TreeGrafter"/>
</dbReference>
<dbReference type="GO" id="GO:0010288">
    <property type="term" value="P:response to lead ion"/>
    <property type="evidence" value="ECO:0007669"/>
    <property type="project" value="TreeGrafter"/>
</dbReference>
<dbReference type="CDD" id="cd00090">
    <property type="entry name" value="HTH_ARSR"/>
    <property type="match status" value="1"/>
</dbReference>
<dbReference type="FunFam" id="1.10.10.10:FF:000373">
    <property type="entry name" value="ArsR family transcriptional regulator"/>
    <property type="match status" value="1"/>
</dbReference>
<dbReference type="Gene3D" id="1.10.10.10">
    <property type="entry name" value="Winged helix-like DNA-binding domain superfamily/Winged helix DNA-binding domain"/>
    <property type="match status" value="1"/>
</dbReference>
<dbReference type="InterPro" id="IPR011991">
    <property type="entry name" value="ArsR-like_HTH"/>
</dbReference>
<dbReference type="InterPro" id="IPR001845">
    <property type="entry name" value="HTH_ArsR_DNA-bd_dom"/>
</dbReference>
<dbReference type="InterPro" id="IPR052543">
    <property type="entry name" value="HTH_Metal-responsive_Reg"/>
</dbReference>
<dbReference type="InterPro" id="IPR036388">
    <property type="entry name" value="WH-like_DNA-bd_sf"/>
</dbReference>
<dbReference type="InterPro" id="IPR036390">
    <property type="entry name" value="WH_DNA-bd_sf"/>
</dbReference>
<dbReference type="NCBIfam" id="NF033788">
    <property type="entry name" value="HTH_metalloreg"/>
    <property type="match status" value="1"/>
</dbReference>
<dbReference type="PANTHER" id="PTHR39168:SF2">
    <property type="entry name" value="HTH-TYPE TRANSCRIPTIONAL REGULATOR CMTR"/>
    <property type="match status" value="1"/>
</dbReference>
<dbReference type="PANTHER" id="PTHR39168">
    <property type="entry name" value="TRANSCRIPTIONAL REGULATOR-RELATED"/>
    <property type="match status" value="1"/>
</dbReference>
<dbReference type="Pfam" id="PF01022">
    <property type="entry name" value="HTH_5"/>
    <property type="match status" value="1"/>
</dbReference>
<dbReference type="PRINTS" id="PR00778">
    <property type="entry name" value="HTHARSR"/>
</dbReference>
<dbReference type="SMART" id="SM00418">
    <property type="entry name" value="HTH_ARSR"/>
    <property type="match status" value="1"/>
</dbReference>
<dbReference type="SUPFAM" id="SSF46785">
    <property type="entry name" value="Winged helix' DNA-binding domain"/>
    <property type="match status" value="1"/>
</dbReference>
<dbReference type="PROSITE" id="PS50987">
    <property type="entry name" value="HTH_ARSR_2"/>
    <property type="match status" value="1"/>
</dbReference>
<accession>P9WMI8</accession>
<accession>L0T9V9</accession>
<accession>P67731</accession>
<accession>Q10864</accession>
<proteinExistence type="inferred from homology"/>
<organism>
    <name type="scientific">Mycobacterium tuberculosis (strain CDC 1551 / Oshkosh)</name>
    <dbReference type="NCBI Taxonomy" id="83331"/>
    <lineage>
        <taxon>Bacteria</taxon>
        <taxon>Bacillati</taxon>
        <taxon>Actinomycetota</taxon>
        <taxon>Actinomycetes</taxon>
        <taxon>Mycobacteriales</taxon>
        <taxon>Mycobacteriaceae</taxon>
        <taxon>Mycobacterium</taxon>
        <taxon>Mycobacterium tuberculosis complex</taxon>
    </lineage>
</organism>